<accession>P86794</accession>
<organism>
    <name type="scientific">Fagopyrum esculentum</name>
    <name type="common">Common buckwheat</name>
    <name type="synonym">Polygonum fagopyrum</name>
    <dbReference type="NCBI Taxonomy" id="3617"/>
    <lineage>
        <taxon>Eukaryota</taxon>
        <taxon>Viridiplantae</taxon>
        <taxon>Streptophyta</taxon>
        <taxon>Embryophyta</taxon>
        <taxon>Tracheophyta</taxon>
        <taxon>Spermatophyta</taxon>
        <taxon>Magnoliopsida</taxon>
        <taxon>eudicotyledons</taxon>
        <taxon>Gunneridae</taxon>
        <taxon>Pentapetalae</taxon>
        <taxon>Caryophyllales</taxon>
        <taxon>Polygonaceae</taxon>
        <taxon>Polygonoideae</taxon>
        <taxon>Fagopyreae</taxon>
        <taxon>Fagopyrum</taxon>
    </lineage>
</organism>
<protein>
    <recommendedName>
        <fullName evidence="2">Trypsin inhibitor 2c</fullName>
    </recommendedName>
    <alternativeName>
        <fullName evidence="2">BWI-2c</fullName>
    </alternativeName>
</protein>
<sequence length="41" mass="5186">SEKPQQELEECQNVCRMKRWSTEMVHRCEKKCEEKFERQQR</sequence>
<keyword id="KW-0002">3D-structure</keyword>
<keyword id="KW-0903">Direct protein sequencing</keyword>
<keyword id="KW-1015">Disulfide bond</keyword>
<keyword id="KW-0646">Protease inhibitor</keyword>
<keyword id="KW-0722">Serine protease inhibitor</keyword>
<proteinExistence type="evidence at protein level"/>
<name>ITR2C_FAGES</name>
<feature type="chain" id="PRO_0000419016" description="Trypsin inhibitor 2c">
    <location>
        <begin position="1"/>
        <end position="41"/>
    </location>
</feature>
<feature type="disulfide bond" evidence="1">
    <location>
        <begin position="11"/>
        <end position="32"/>
    </location>
</feature>
<feature type="disulfide bond" evidence="1">
    <location>
        <begin position="15"/>
        <end position="28"/>
    </location>
</feature>
<dbReference type="PDB" id="2LQX">
    <property type="method" value="NMR"/>
    <property type="chains" value="A=1-41"/>
</dbReference>
<dbReference type="PDBsum" id="2LQX"/>
<dbReference type="BMRB" id="P86794"/>
<dbReference type="SMR" id="P86794"/>
<dbReference type="MEROPS" id="I73.002"/>
<dbReference type="GO" id="GO:0004867">
    <property type="term" value="F:serine-type endopeptidase inhibitor activity"/>
    <property type="evidence" value="ECO:0000314"/>
    <property type="project" value="UniProtKB"/>
</dbReference>
<dbReference type="GO" id="GO:0010466">
    <property type="term" value="P:negative regulation of peptidase activity"/>
    <property type="evidence" value="ECO:0000314"/>
    <property type="project" value="UniProtKB"/>
</dbReference>
<dbReference type="Gene3D" id="6.10.250.1700">
    <property type="match status" value="1"/>
</dbReference>
<evidence type="ECO:0000269" key="1">
    <source>
    </source>
</evidence>
<evidence type="ECO:0000303" key="2">
    <source>
    </source>
</evidence>
<evidence type="ECO:0000305" key="3"/>
<comment type="function">
    <text evidence="1">Inhibits bovine trypsin with a Ki of 0.174 nM and trypsin-like proteases from G.mellonella larvae. Has no activity against serine proteases chymotrypsin, subtilisin and elastase. Has no activity against cysteine proteases from beetle gut.</text>
</comment>
<comment type="mass spectrometry" mass="5182.0" error="0.5" method="MALDI" evidence="1"/>
<reference evidence="3" key="1">
    <citation type="journal article" date="2012" name="Biochem. J.">
        <title>Buckwheat trypsin inhibitor with helical hairpin structure belongs to a new family of plant defense peptides.</title>
        <authorList>
            <person name="Oparin P.B."/>
            <person name="Mineev K.S."/>
            <person name="Dunaevsky Y.E."/>
            <person name="Arseniev A.S."/>
            <person name="Belozersky M.A."/>
            <person name="Grishin E.V."/>
            <person name="Egorov T.A."/>
            <person name="Vassilevski A.A."/>
        </authorList>
    </citation>
    <scope>PROTEIN SEQUENCE</scope>
    <scope>FUNCTION</scope>
    <scope>MASS SPECTROMETRY</scope>
    <scope>DISULFIDE BONDS</scope>
    <scope>STRUCTURE BY NMR</scope>
    <source>
        <strain evidence="1">cv. Shatilovskaya 5</strain>
        <tissue evidence="1">Seed</tissue>
    </source>
</reference>